<gene>
    <name evidence="1" type="primary">rnhA</name>
    <name type="ordered locus">EcolC_3451</name>
</gene>
<reference key="1">
    <citation type="submission" date="2008-02" db="EMBL/GenBank/DDBJ databases">
        <title>Complete sequence of Escherichia coli C str. ATCC 8739.</title>
        <authorList>
            <person name="Copeland A."/>
            <person name="Lucas S."/>
            <person name="Lapidus A."/>
            <person name="Glavina del Rio T."/>
            <person name="Dalin E."/>
            <person name="Tice H."/>
            <person name="Bruce D."/>
            <person name="Goodwin L."/>
            <person name="Pitluck S."/>
            <person name="Kiss H."/>
            <person name="Brettin T."/>
            <person name="Detter J.C."/>
            <person name="Han C."/>
            <person name="Kuske C.R."/>
            <person name="Schmutz J."/>
            <person name="Larimer F."/>
            <person name="Land M."/>
            <person name="Hauser L."/>
            <person name="Kyrpides N."/>
            <person name="Mikhailova N."/>
            <person name="Ingram L."/>
            <person name="Richardson P."/>
        </authorList>
    </citation>
    <scope>NUCLEOTIDE SEQUENCE [LARGE SCALE GENOMIC DNA]</scope>
    <source>
        <strain>ATCC 8739 / DSM 1576 / NBRC 3972 / NCIMB 8545 / WDCM 00012 / Crooks</strain>
    </source>
</reference>
<organism>
    <name type="scientific">Escherichia coli (strain ATCC 8739 / DSM 1576 / NBRC 3972 / NCIMB 8545 / WDCM 00012 / Crooks)</name>
    <dbReference type="NCBI Taxonomy" id="481805"/>
    <lineage>
        <taxon>Bacteria</taxon>
        <taxon>Pseudomonadati</taxon>
        <taxon>Pseudomonadota</taxon>
        <taxon>Gammaproteobacteria</taxon>
        <taxon>Enterobacterales</taxon>
        <taxon>Enterobacteriaceae</taxon>
        <taxon>Escherichia</taxon>
    </lineage>
</organism>
<evidence type="ECO:0000255" key="1">
    <source>
        <dbReference type="HAMAP-Rule" id="MF_00042"/>
    </source>
</evidence>
<evidence type="ECO:0000255" key="2">
    <source>
        <dbReference type="PROSITE-ProRule" id="PRU00408"/>
    </source>
</evidence>
<keyword id="KW-0963">Cytoplasm</keyword>
<keyword id="KW-0255">Endonuclease</keyword>
<keyword id="KW-0378">Hydrolase</keyword>
<keyword id="KW-0460">Magnesium</keyword>
<keyword id="KW-0479">Metal-binding</keyword>
<keyword id="KW-0540">Nuclease</keyword>
<accession>B1IPU4</accession>
<name>RNH_ECOLC</name>
<dbReference type="EC" id="3.1.26.4" evidence="1"/>
<dbReference type="EMBL" id="CP000946">
    <property type="protein sequence ID" value="ACA79065.1"/>
    <property type="molecule type" value="Genomic_DNA"/>
</dbReference>
<dbReference type="RefSeq" id="WP_000917883.1">
    <property type="nucleotide sequence ID" value="NZ_MTFT01000054.1"/>
</dbReference>
<dbReference type="BMRB" id="B1IPU4"/>
<dbReference type="SMR" id="B1IPU4"/>
<dbReference type="GeneID" id="93777209"/>
<dbReference type="KEGG" id="ecl:EcolC_3451"/>
<dbReference type="HOGENOM" id="CLU_030894_6_0_6"/>
<dbReference type="GO" id="GO:0005737">
    <property type="term" value="C:cytoplasm"/>
    <property type="evidence" value="ECO:0007669"/>
    <property type="project" value="UniProtKB-SubCell"/>
</dbReference>
<dbReference type="GO" id="GO:0000287">
    <property type="term" value="F:magnesium ion binding"/>
    <property type="evidence" value="ECO:0007669"/>
    <property type="project" value="UniProtKB-UniRule"/>
</dbReference>
<dbReference type="GO" id="GO:0003676">
    <property type="term" value="F:nucleic acid binding"/>
    <property type="evidence" value="ECO:0007669"/>
    <property type="project" value="InterPro"/>
</dbReference>
<dbReference type="GO" id="GO:0004523">
    <property type="term" value="F:RNA-DNA hybrid ribonuclease activity"/>
    <property type="evidence" value="ECO:0007669"/>
    <property type="project" value="UniProtKB-UniRule"/>
</dbReference>
<dbReference type="GO" id="GO:0043137">
    <property type="term" value="P:DNA replication, removal of RNA primer"/>
    <property type="evidence" value="ECO:0007669"/>
    <property type="project" value="TreeGrafter"/>
</dbReference>
<dbReference type="CDD" id="cd09278">
    <property type="entry name" value="RNase_HI_prokaryote_like"/>
    <property type="match status" value="1"/>
</dbReference>
<dbReference type="FunFam" id="3.30.420.10:FF:000008">
    <property type="entry name" value="Ribonuclease H"/>
    <property type="match status" value="1"/>
</dbReference>
<dbReference type="Gene3D" id="3.30.420.10">
    <property type="entry name" value="Ribonuclease H-like superfamily/Ribonuclease H"/>
    <property type="match status" value="1"/>
</dbReference>
<dbReference type="HAMAP" id="MF_00042">
    <property type="entry name" value="RNase_H"/>
    <property type="match status" value="1"/>
</dbReference>
<dbReference type="InterPro" id="IPR050092">
    <property type="entry name" value="RNase_H"/>
</dbReference>
<dbReference type="InterPro" id="IPR012337">
    <property type="entry name" value="RNaseH-like_sf"/>
</dbReference>
<dbReference type="InterPro" id="IPR002156">
    <property type="entry name" value="RNaseH_domain"/>
</dbReference>
<dbReference type="InterPro" id="IPR036397">
    <property type="entry name" value="RNaseH_sf"/>
</dbReference>
<dbReference type="InterPro" id="IPR022892">
    <property type="entry name" value="RNaseHI"/>
</dbReference>
<dbReference type="NCBIfam" id="NF001236">
    <property type="entry name" value="PRK00203.1"/>
    <property type="match status" value="1"/>
</dbReference>
<dbReference type="PANTHER" id="PTHR10642">
    <property type="entry name" value="RIBONUCLEASE H1"/>
    <property type="match status" value="1"/>
</dbReference>
<dbReference type="PANTHER" id="PTHR10642:SF26">
    <property type="entry name" value="RIBONUCLEASE H1"/>
    <property type="match status" value="1"/>
</dbReference>
<dbReference type="Pfam" id="PF00075">
    <property type="entry name" value="RNase_H"/>
    <property type="match status" value="1"/>
</dbReference>
<dbReference type="SUPFAM" id="SSF53098">
    <property type="entry name" value="Ribonuclease H-like"/>
    <property type="match status" value="1"/>
</dbReference>
<dbReference type="PROSITE" id="PS50879">
    <property type="entry name" value="RNASE_H_1"/>
    <property type="match status" value="1"/>
</dbReference>
<protein>
    <recommendedName>
        <fullName evidence="1">Ribonuclease H</fullName>
        <shortName evidence="1">RNase H</shortName>
        <ecNumber evidence="1">3.1.26.4</ecNumber>
    </recommendedName>
</protein>
<sequence length="155" mass="17597">MLKQVEIFTDGSCLGNPGPGGYGAILRYRGREKTFSAGYTRTTNNRMELMAAIVALEALKEHCEVILSTDSQYVRQGITQWIHNWKKRGWKTADKKPVKNVDLWQRLDAALGQHQIKWEWVKGHAGHPENERCDELARAAAMNPTLEDTGYQVEV</sequence>
<comment type="function">
    <text evidence="1">Endonuclease that specifically degrades the RNA of RNA-DNA hybrids.</text>
</comment>
<comment type="catalytic activity">
    <reaction evidence="1">
        <text>Endonucleolytic cleavage to 5'-phosphomonoester.</text>
        <dbReference type="EC" id="3.1.26.4"/>
    </reaction>
</comment>
<comment type="cofactor">
    <cofactor evidence="1">
        <name>Mg(2+)</name>
        <dbReference type="ChEBI" id="CHEBI:18420"/>
    </cofactor>
    <text evidence="1">Binds 1 Mg(2+) ion per subunit. May bind a second metal ion at a regulatory site, or after substrate binding.</text>
</comment>
<comment type="subunit">
    <text evidence="1">Monomer.</text>
</comment>
<comment type="subcellular location">
    <subcellularLocation>
        <location evidence="1">Cytoplasm</location>
    </subcellularLocation>
</comment>
<comment type="similarity">
    <text evidence="1">Belongs to the RNase H family.</text>
</comment>
<proteinExistence type="inferred from homology"/>
<feature type="chain" id="PRO_1000074643" description="Ribonuclease H">
    <location>
        <begin position="1"/>
        <end position="155"/>
    </location>
</feature>
<feature type="domain" description="RNase H type-1" evidence="2">
    <location>
        <begin position="1"/>
        <end position="142"/>
    </location>
</feature>
<feature type="binding site" evidence="1">
    <location>
        <position position="10"/>
    </location>
    <ligand>
        <name>Mg(2+)</name>
        <dbReference type="ChEBI" id="CHEBI:18420"/>
        <label>1</label>
    </ligand>
</feature>
<feature type="binding site" evidence="1">
    <location>
        <position position="10"/>
    </location>
    <ligand>
        <name>Mg(2+)</name>
        <dbReference type="ChEBI" id="CHEBI:18420"/>
        <label>2</label>
    </ligand>
</feature>
<feature type="binding site" evidence="1">
    <location>
        <position position="48"/>
    </location>
    <ligand>
        <name>Mg(2+)</name>
        <dbReference type="ChEBI" id="CHEBI:18420"/>
        <label>1</label>
    </ligand>
</feature>
<feature type="binding site" evidence="1">
    <location>
        <position position="70"/>
    </location>
    <ligand>
        <name>Mg(2+)</name>
        <dbReference type="ChEBI" id="CHEBI:18420"/>
        <label>1</label>
    </ligand>
</feature>
<feature type="binding site" evidence="1">
    <location>
        <position position="134"/>
    </location>
    <ligand>
        <name>Mg(2+)</name>
        <dbReference type="ChEBI" id="CHEBI:18420"/>
        <label>2</label>
    </ligand>
</feature>